<feature type="chain" id="PRO_1000065770" description="N-succinylglutamate 5-semialdehyde dehydrogenase">
    <location>
        <begin position="1"/>
        <end position="485"/>
    </location>
</feature>
<feature type="active site" evidence="1">
    <location>
        <position position="243"/>
    </location>
</feature>
<feature type="active site" evidence="1">
    <location>
        <position position="278"/>
    </location>
</feature>
<feature type="binding site" evidence="1">
    <location>
        <begin position="220"/>
        <end position="225"/>
    </location>
    <ligand>
        <name>NAD(+)</name>
        <dbReference type="ChEBI" id="CHEBI:57540"/>
    </ligand>
</feature>
<reference key="1">
    <citation type="submission" date="2007-08" db="EMBL/GenBank/DDBJ databases">
        <authorList>
            <consortium name="The Vibrio harveyi Genome Sequencing Project"/>
            <person name="Bassler B."/>
            <person name="Clifton S.W."/>
            <person name="Fulton L."/>
            <person name="Delehaunty K."/>
            <person name="Fronick C."/>
            <person name="Harrison M."/>
            <person name="Markivic C."/>
            <person name="Fulton R."/>
            <person name="Tin-Wollam A.-M."/>
            <person name="Shah N."/>
            <person name="Pepin K."/>
            <person name="Nash W."/>
            <person name="Thiruvilangam P."/>
            <person name="Bhonagiri V."/>
            <person name="Waters C."/>
            <person name="Tu K.C."/>
            <person name="Irgon J."/>
            <person name="Wilson R.K."/>
        </authorList>
    </citation>
    <scope>NUCLEOTIDE SEQUENCE [LARGE SCALE GENOMIC DNA]</scope>
    <source>
        <strain>ATCC BAA-1116 / BB120</strain>
    </source>
</reference>
<name>ASTD_VIBC1</name>
<comment type="function">
    <text evidence="1">Catalyzes the NAD-dependent reduction of succinylglutamate semialdehyde into succinylglutamate.</text>
</comment>
<comment type="catalytic activity">
    <reaction evidence="1">
        <text>N-succinyl-L-glutamate 5-semialdehyde + NAD(+) + H2O = N-succinyl-L-glutamate + NADH + 2 H(+)</text>
        <dbReference type="Rhea" id="RHEA:10812"/>
        <dbReference type="ChEBI" id="CHEBI:15377"/>
        <dbReference type="ChEBI" id="CHEBI:15378"/>
        <dbReference type="ChEBI" id="CHEBI:57540"/>
        <dbReference type="ChEBI" id="CHEBI:57945"/>
        <dbReference type="ChEBI" id="CHEBI:58520"/>
        <dbReference type="ChEBI" id="CHEBI:58763"/>
        <dbReference type="EC" id="1.2.1.71"/>
    </reaction>
</comment>
<comment type="pathway">
    <text evidence="1">Amino-acid degradation; L-arginine degradation via AST pathway; L-glutamate and succinate from L-arginine: step 4/5.</text>
</comment>
<comment type="similarity">
    <text evidence="1">Belongs to the aldehyde dehydrogenase family. AstD subfamily.</text>
</comment>
<gene>
    <name evidence="1" type="primary">astD</name>
    <name type="ordered locus">VIBHAR_00077</name>
</gene>
<dbReference type="EC" id="1.2.1.71" evidence="1"/>
<dbReference type="EMBL" id="CP000789">
    <property type="protein sequence ID" value="ABU69137.1"/>
    <property type="molecule type" value="Genomic_DNA"/>
</dbReference>
<dbReference type="RefSeq" id="WP_012126463.1">
    <property type="nucleotide sequence ID" value="NC_009783.1"/>
</dbReference>
<dbReference type="SMR" id="A7MX96"/>
<dbReference type="KEGG" id="vha:VIBHAR_00077"/>
<dbReference type="PATRIC" id="fig|338187.25.peg.2444"/>
<dbReference type="UniPathway" id="UPA00185">
    <property type="reaction ID" value="UER00282"/>
</dbReference>
<dbReference type="Proteomes" id="UP000008152">
    <property type="component" value="Chromosome I"/>
</dbReference>
<dbReference type="GO" id="GO:0043824">
    <property type="term" value="F:succinylglutamate-semialdehyde dehydrogenase activity"/>
    <property type="evidence" value="ECO:0007669"/>
    <property type="project" value="UniProtKB-EC"/>
</dbReference>
<dbReference type="GO" id="GO:0019544">
    <property type="term" value="P:arginine catabolic process to glutamate"/>
    <property type="evidence" value="ECO:0007669"/>
    <property type="project" value="UniProtKB-UniRule"/>
</dbReference>
<dbReference type="GO" id="GO:0019545">
    <property type="term" value="P:arginine catabolic process to succinate"/>
    <property type="evidence" value="ECO:0007669"/>
    <property type="project" value="UniProtKB-UniRule"/>
</dbReference>
<dbReference type="CDD" id="cd07095">
    <property type="entry name" value="ALDH_SGSD_AstD"/>
    <property type="match status" value="1"/>
</dbReference>
<dbReference type="FunFam" id="3.40.605.10:FF:000010">
    <property type="entry name" value="N-succinylglutamate 5-semialdehyde dehydrogenase"/>
    <property type="match status" value="1"/>
</dbReference>
<dbReference type="Gene3D" id="3.40.605.10">
    <property type="entry name" value="Aldehyde Dehydrogenase, Chain A, domain 1"/>
    <property type="match status" value="1"/>
</dbReference>
<dbReference type="Gene3D" id="3.40.309.10">
    <property type="entry name" value="Aldehyde Dehydrogenase, Chain A, domain 2"/>
    <property type="match status" value="1"/>
</dbReference>
<dbReference type="HAMAP" id="MF_01174">
    <property type="entry name" value="Aldedh_AstD"/>
    <property type="match status" value="1"/>
</dbReference>
<dbReference type="InterPro" id="IPR016161">
    <property type="entry name" value="Ald_DH/histidinol_DH"/>
</dbReference>
<dbReference type="InterPro" id="IPR016163">
    <property type="entry name" value="Ald_DH_C"/>
</dbReference>
<dbReference type="InterPro" id="IPR016160">
    <property type="entry name" value="Ald_DH_CS_CYS"/>
</dbReference>
<dbReference type="InterPro" id="IPR029510">
    <property type="entry name" value="Ald_DH_CS_GLU"/>
</dbReference>
<dbReference type="InterPro" id="IPR016162">
    <property type="entry name" value="Ald_DH_N"/>
</dbReference>
<dbReference type="InterPro" id="IPR015590">
    <property type="entry name" value="Aldehyde_DH_dom"/>
</dbReference>
<dbReference type="InterPro" id="IPR017649">
    <property type="entry name" value="SuccinylGlu_semiald_DH_AstD"/>
</dbReference>
<dbReference type="NCBIfam" id="TIGR03240">
    <property type="entry name" value="arg_catab_astD"/>
    <property type="match status" value="1"/>
</dbReference>
<dbReference type="NCBIfam" id="NF006992">
    <property type="entry name" value="PRK09457.1"/>
    <property type="match status" value="1"/>
</dbReference>
<dbReference type="PANTHER" id="PTHR11699">
    <property type="entry name" value="ALDEHYDE DEHYDROGENASE-RELATED"/>
    <property type="match status" value="1"/>
</dbReference>
<dbReference type="Pfam" id="PF00171">
    <property type="entry name" value="Aldedh"/>
    <property type="match status" value="1"/>
</dbReference>
<dbReference type="SUPFAM" id="SSF53720">
    <property type="entry name" value="ALDH-like"/>
    <property type="match status" value="1"/>
</dbReference>
<dbReference type="PROSITE" id="PS00070">
    <property type="entry name" value="ALDEHYDE_DEHYDR_CYS"/>
    <property type="match status" value="1"/>
</dbReference>
<dbReference type="PROSITE" id="PS00687">
    <property type="entry name" value="ALDEHYDE_DEHYDR_GLU"/>
    <property type="match status" value="1"/>
</dbReference>
<protein>
    <recommendedName>
        <fullName evidence="1">N-succinylglutamate 5-semialdehyde dehydrogenase</fullName>
        <ecNumber evidence="1">1.2.1.71</ecNumber>
    </recommendedName>
    <alternativeName>
        <fullName evidence="1">Succinylglutamic semialdehyde dehydrogenase</fullName>
        <shortName evidence="1">SGSD</shortName>
    </alternativeName>
</protein>
<evidence type="ECO:0000255" key="1">
    <source>
        <dbReference type="HAMAP-Rule" id="MF_01174"/>
    </source>
</evidence>
<organism>
    <name type="scientific">Vibrio campbellii (strain ATCC BAA-1116)</name>
    <dbReference type="NCBI Taxonomy" id="2902295"/>
    <lineage>
        <taxon>Bacteria</taxon>
        <taxon>Pseudomonadati</taxon>
        <taxon>Pseudomonadota</taxon>
        <taxon>Gammaproteobacteria</taxon>
        <taxon>Vibrionales</taxon>
        <taxon>Vibrionaceae</taxon>
        <taxon>Vibrio</taxon>
    </lineage>
</organism>
<keyword id="KW-0056">Arginine metabolism</keyword>
<keyword id="KW-0520">NAD</keyword>
<keyword id="KW-0560">Oxidoreductase</keyword>
<sequence>MTHWIAGEWVQGQGEAFTSLSPYNQEVIWQGNGATAEQVNQAVSAAREAFVDWKKRPFAEREAIVLAFAEKVKENSEKIAEVIAKETGKPIWETRTEAAAMAGKIAISIRAYHDRTGEATREAAGNQIVLRHRPLGVMAVFGPYNFPGHLPNGHIVPALLAGNTVVFKPSEQTPWTGELAMKLWEEVGLPKGVINLVQGAKETGIALADAKGIDGVLFTGSANTGHVLHRQFAGQPGKMLALEMGGNNPMVISDNYGDLDATVYTIIQSAFISAGQRCTCARRLYIPFGDKGDAVITKLVEATRNIRVDRPFAEPAPFMGPQISVAAAKFILDAQANLQSLGGESLIEAKAGEAAFVSPGIIDVTNIAELPDEEYFGPLLQVVRYEGLEKAVELANDTRFGLSAGLVSTDDQEWEYFVDHIRAGIVNRNRQLTGASGDAPFGGPGASGNLRPSAYYAADYCAYPMASMEGQETVLPATLSPGVSL</sequence>
<proteinExistence type="inferred from homology"/>
<accession>A7MX96</accession>